<organism>
    <name type="scientific">Pseudomonas aeruginosa (strain UCBPP-PA14)</name>
    <dbReference type="NCBI Taxonomy" id="208963"/>
    <lineage>
        <taxon>Bacteria</taxon>
        <taxon>Pseudomonadati</taxon>
        <taxon>Pseudomonadota</taxon>
        <taxon>Gammaproteobacteria</taxon>
        <taxon>Pseudomonadales</taxon>
        <taxon>Pseudomonadaceae</taxon>
        <taxon>Pseudomonas</taxon>
    </lineage>
</organism>
<name>RL362_PSEAB</name>
<sequence>MKVLASLKQAKLRHRDCQVVKRRGRLYVICKSNPRFKCVQGRPKPKIKRR</sequence>
<accession>Q02R72</accession>
<proteinExistence type="inferred from homology"/>
<evidence type="ECO:0000255" key="1">
    <source>
        <dbReference type="HAMAP-Rule" id="MF_00251"/>
    </source>
</evidence>
<evidence type="ECO:0000305" key="2"/>
<gene>
    <name evidence="1" type="primary">rpmJ2</name>
    <name type="ordered locus">PA14_17710</name>
</gene>
<protein>
    <recommendedName>
        <fullName evidence="1">Large ribosomal subunit protein bL36B</fullName>
    </recommendedName>
    <alternativeName>
        <fullName evidence="2">50S ribosomal protein L36 2</fullName>
    </alternativeName>
</protein>
<keyword id="KW-0687">Ribonucleoprotein</keyword>
<keyword id="KW-0689">Ribosomal protein</keyword>
<comment type="similarity">
    <text evidence="1">Belongs to the bacterial ribosomal protein bL36 family.</text>
</comment>
<dbReference type="EMBL" id="CP000438">
    <property type="protein sequence ID" value="ABJ12834.1"/>
    <property type="molecule type" value="Genomic_DNA"/>
</dbReference>
<dbReference type="SMR" id="Q02R72"/>
<dbReference type="KEGG" id="pau:PA14_17710"/>
<dbReference type="PseudoCAP" id="PA14_17710"/>
<dbReference type="HOGENOM" id="CLU_135723_3_1_6"/>
<dbReference type="BioCyc" id="PAER208963:G1G74-1462-MONOMER"/>
<dbReference type="Proteomes" id="UP000000653">
    <property type="component" value="Chromosome"/>
</dbReference>
<dbReference type="GO" id="GO:1990904">
    <property type="term" value="C:ribonucleoprotein complex"/>
    <property type="evidence" value="ECO:0007669"/>
    <property type="project" value="UniProtKB-KW"/>
</dbReference>
<dbReference type="GO" id="GO:0005840">
    <property type="term" value="C:ribosome"/>
    <property type="evidence" value="ECO:0007669"/>
    <property type="project" value="UniProtKB-KW"/>
</dbReference>
<dbReference type="GO" id="GO:0003735">
    <property type="term" value="F:structural constituent of ribosome"/>
    <property type="evidence" value="ECO:0007669"/>
    <property type="project" value="InterPro"/>
</dbReference>
<dbReference type="GO" id="GO:0006412">
    <property type="term" value="P:translation"/>
    <property type="evidence" value="ECO:0007669"/>
    <property type="project" value="UniProtKB-UniRule"/>
</dbReference>
<dbReference type="HAMAP" id="MF_00251">
    <property type="entry name" value="Ribosomal_bL36"/>
    <property type="match status" value="1"/>
</dbReference>
<dbReference type="InterPro" id="IPR000473">
    <property type="entry name" value="Ribosomal_bL36"/>
</dbReference>
<dbReference type="InterPro" id="IPR035977">
    <property type="entry name" value="Ribosomal_bL36_sp"/>
</dbReference>
<dbReference type="InterPro" id="IPR047621">
    <property type="entry name" value="Ribosomal_L36_bact"/>
</dbReference>
<dbReference type="NCBIfam" id="NF002021">
    <property type="entry name" value="PRK00831.1"/>
    <property type="match status" value="1"/>
</dbReference>
<dbReference type="NCBIfam" id="TIGR01022">
    <property type="entry name" value="rpmJ_bact"/>
    <property type="match status" value="1"/>
</dbReference>
<dbReference type="PANTHER" id="PTHR47781">
    <property type="entry name" value="50S RIBOSOMAL PROTEIN L36 2"/>
    <property type="match status" value="1"/>
</dbReference>
<dbReference type="PANTHER" id="PTHR47781:SF1">
    <property type="entry name" value="LARGE RIBOSOMAL SUBUNIT PROTEIN BL36B"/>
    <property type="match status" value="1"/>
</dbReference>
<dbReference type="Pfam" id="PF00444">
    <property type="entry name" value="Ribosomal_L36"/>
    <property type="match status" value="1"/>
</dbReference>
<dbReference type="SUPFAM" id="SSF57840">
    <property type="entry name" value="Ribosomal protein L36"/>
    <property type="match status" value="1"/>
</dbReference>
<dbReference type="PROSITE" id="PS00828">
    <property type="entry name" value="RIBOSOMAL_L36"/>
    <property type="match status" value="1"/>
</dbReference>
<feature type="chain" id="PRO_0000344706" description="Large ribosomal subunit protein bL36B">
    <location>
        <begin position="1"/>
        <end position="50"/>
    </location>
</feature>
<reference key="1">
    <citation type="journal article" date="2006" name="Genome Biol.">
        <title>Genomic analysis reveals that Pseudomonas aeruginosa virulence is combinatorial.</title>
        <authorList>
            <person name="Lee D.G."/>
            <person name="Urbach J.M."/>
            <person name="Wu G."/>
            <person name="Liberati N.T."/>
            <person name="Feinbaum R.L."/>
            <person name="Miyata S."/>
            <person name="Diggins L.T."/>
            <person name="He J."/>
            <person name="Saucier M."/>
            <person name="Deziel E."/>
            <person name="Friedman L."/>
            <person name="Li L."/>
            <person name="Grills G."/>
            <person name="Montgomery K."/>
            <person name="Kucherlapati R."/>
            <person name="Rahme L.G."/>
            <person name="Ausubel F.M."/>
        </authorList>
    </citation>
    <scope>NUCLEOTIDE SEQUENCE [LARGE SCALE GENOMIC DNA]</scope>
    <source>
        <strain>UCBPP-PA14</strain>
    </source>
</reference>